<name>MLTC_SALTY</name>
<dbReference type="EC" id="4.2.2.n1" evidence="1"/>
<dbReference type="EMBL" id="AE006468">
    <property type="protein sequence ID" value="AAL21987.1"/>
    <property type="status" value="ALT_INIT"/>
    <property type="molecule type" value="Genomic_DNA"/>
</dbReference>
<dbReference type="RefSeq" id="NP_462028.1">
    <property type="nucleotide sequence ID" value="NC_003197.2"/>
</dbReference>
<dbReference type="SMR" id="Q8ZM39"/>
<dbReference type="STRING" id="99287.STM3112"/>
<dbReference type="CAZy" id="GH23">
    <property type="family name" value="Glycoside Hydrolase Family 23"/>
</dbReference>
<dbReference type="PaxDb" id="99287-STM3112"/>
<dbReference type="GeneID" id="1254635"/>
<dbReference type="KEGG" id="stm:STM3112"/>
<dbReference type="PATRIC" id="fig|99287.12.peg.3298"/>
<dbReference type="HOGENOM" id="CLU_044583_0_0_6"/>
<dbReference type="OMA" id="AIMQIES"/>
<dbReference type="PhylomeDB" id="Q8ZM39"/>
<dbReference type="Proteomes" id="UP000001014">
    <property type="component" value="Chromosome"/>
</dbReference>
<dbReference type="GO" id="GO:0009279">
    <property type="term" value="C:cell outer membrane"/>
    <property type="evidence" value="ECO:0007669"/>
    <property type="project" value="UniProtKB-SubCell"/>
</dbReference>
<dbReference type="GO" id="GO:0016798">
    <property type="term" value="F:hydrolase activity, acting on glycosyl bonds"/>
    <property type="evidence" value="ECO:0007669"/>
    <property type="project" value="InterPro"/>
</dbReference>
<dbReference type="GO" id="GO:0008933">
    <property type="term" value="F:peptidoglycan lytic transglycosylase activity"/>
    <property type="evidence" value="ECO:0007669"/>
    <property type="project" value="UniProtKB-UniRule"/>
</dbReference>
<dbReference type="GO" id="GO:0016998">
    <property type="term" value="P:cell wall macromolecule catabolic process"/>
    <property type="evidence" value="ECO:0007669"/>
    <property type="project" value="UniProtKB-UniRule"/>
</dbReference>
<dbReference type="GO" id="GO:0071555">
    <property type="term" value="P:cell wall organization"/>
    <property type="evidence" value="ECO:0007669"/>
    <property type="project" value="UniProtKB-KW"/>
</dbReference>
<dbReference type="GO" id="GO:0000270">
    <property type="term" value="P:peptidoglycan metabolic process"/>
    <property type="evidence" value="ECO:0007669"/>
    <property type="project" value="InterPro"/>
</dbReference>
<dbReference type="CDD" id="cd16893">
    <property type="entry name" value="LT_MltC_MltE"/>
    <property type="match status" value="1"/>
</dbReference>
<dbReference type="FunFam" id="1.10.530.10:FF:000002">
    <property type="entry name" value="Membrane-bound lytic murein transglycosylase C"/>
    <property type="match status" value="1"/>
</dbReference>
<dbReference type="Gene3D" id="1.10.530.10">
    <property type="match status" value="1"/>
</dbReference>
<dbReference type="HAMAP" id="MF_01616">
    <property type="entry name" value="MltC"/>
    <property type="match status" value="1"/>
</dbReference>
<dbReference type="InterPro" id="IPR023346">
    <property type="entry name" value="Lysozyme-like_dom_sf"/>
</dbReference>
<dbReference type="InterPro" id="IPR023664">
    <property type="entry name" value="Murein_transglycosylaseC"/>
</dbReference>
<dbReference type="InterPro" id="IPR024570">
    <property type="entry name" value="Murein_transglycosylaseC_N"/>
</dbReference>
<dbReference type="InterPro" id="IPR000189">
    <property type="entry name" value="Transglyc_AS"/>
</dbReference>
<dbReference type="InterPro" id="IPR008258">
    <property type="entry name" value="Transglycosylase_SLT_dom_1"/>
</dbReference>
<dbReference type="NCBIfam" id="NF008670">
    <property type="entry name" value="PRK11671.1"/>
    <property type="match status" value="1"/>
</dbReference>
<dbReference type="PANTHER" id="PTHR37423:SF2">
    <property type="entry name" value="MEMBRANE-BOUND LYTIC MUREIN TRANSGLYCOSYLASE C"/>
    <property type="match status" value="1"/>
</dbReference>
<dbReference type="PANTHER" id="PTHR37423">
    <property type="entry name" value="SOLUBLE LYTIC MUREIN TRANSGLYCOSYLASE-RELATED"/>
    <property type="match status" value="1"/>
</dbReference>
<dbReference type="Pfam" id="PF11873">
    <property type="entry name" value="Mltc_N"/>
    <property type="match status" value="1"/>
</dbReference>
<dbReference type="Pfam" id="PF01464">
    <property type="entry name" value="SLT"/>
    <property type="match status" value="1"/>
</dbReference>
<dbReference type="SUPFAM" id="SSF53955">
    <property type="entry name" value="Lysozyme-like"/>
    <property type="match status" value="1"/>
</dbReference>
<dbReference type="PROSITE" id="PS51257">
    <property type="entry name" value="PROKAR_LIPOPROTEIN"/>
    <property type="match status" value="1"/>
</dbReference>
<dbReference type="PROSITE" id="PS00922">
    <property type="entry name" value="TRANSGLYCOSYLASE"/>
    <property type="match status" value="1"/>
</dbReference>
<organism>
    <name type="scientific">Salmonella typhimurium (strain LT2 / SGSC1412 / ATCC 700720)</name>
    <dbReference type="NCBI Taxonomy" id="99287"/>
    <lineage>
        <taxon>Bacteria</taxon>
        <taxon>Pseudomonadati</taxon>
        <taxon>Pseudomonadota</taxon>
        <taxon>Gammaproteobacteria</taxon>
        <taxon>Enterobacterales</taxon>
        <taxon>Enterobacteriaceae</taxon>
        <taxon>Salmonella</taxon>
    </lineage>
</organism>
<protein>
    <recommendedName>
        <fullName evidence="1">Membrane-bound lytic murein transglycosylase C</fullName>
        <ecNumber evidence="1">4.2.2.n1</ecNumber>
    </recommendedName>
    <alternativeName>
        <fullName evidence="1">Murein lyase C</fullName>
    </alternativeName>
</protein>
<proteinExistence type="inferred from homology"/>
<gene>
    <name evidence="1" type="primary">mltC</name>
    <name type="ordered locus">STM3112</name>
</gene>
<keyword id="KW-0998">Cell outer membrane</keyword>
<keyword id="KW-0961">Cell wall biogenesis/degradation</keyword>
<keyword id="KW-0449">Lipoprotein</keyword>
<keyword id="KW-0456">Lyase</keyword>
<keyword id="KW-0472">Membrane</keyword>
<keyword id="KW-0564">Palmitate</keyword>
<keyword id="KW-1185">Reference proteome</keyword>
<keyword id="KW-0732">Signal</keyword>
<accession>Q8ZM39</accession>
<feature type="signal peptide" evidence="1">
    <location>
        <begin position="1"/>
        <end position="16"/>
    </location>
</feature>
<feature type="chain" id="PRO_0000032797" description="Membrane-bound lytic murein transglycosylase C">
    <location>
        <begin position="17"/>
        <end position="360"/>
    </location>
</feature>
<feature type="lipid moiety-binding region" description="N-palmitoyl cysteine" evidence="1">
    <location>
        <position position="17"/>
    </location>
</feature>
<feature type="lipid moiety-binding region" description="S-diacylglycerol cysteine" evidence="1">
    <location>
        <position position="17"/>
    </location>
</feature>
<evidence type="ECO:0000255" key="1">
    <source>
        <dbReference type="HAMAP-Rule" id="MF_01616"/>
    </source>
</evidence>
<evidence type="ECO:0000305" key="2"/>
<reference key="1">
    <citation type="journal article" date="2001" name="Nature">
        <title>Complete genome sequence of Salmonella enterica serovar Typhimurium LT2.</title>
        <authorList>
            <person name="McClelland M."/>
            <person name="Sanderson K.E."/>
            <person name="Spieth J."/>
            <person name="Clifton S.W."/>
            <person name="Latreille P."/>
            <person name="Courtney L."/>
            <person name="Porwollik S."/>
            <person name="Ali J."/>
            <person name="Dante M."/>
            <person name="Du F."/>
            <person name="Hou S."/>
            <person name="Layman D."/>
            <person name="Leonard S."/>
            <person name="Nguyen C."/>
            <person name="Scott K."/>
            <person name="Holmes A."/>
            <person name="Grewal N."/>
            <person name="Mulvaney E."/>
            <person name="Ryan E."/>
            <person name="Sun H."/>
            <person name="Florea L."/>
            <person name="Miller W."/>
            <person name="Stoneking T."/>
            <person name="Nhan M."/>
            <person name="Waterston R."/>
            <person name="Wilson R.K."/>
        </authorList>
    </citation>
    <scope>NUCLEOTIDE SEQUENCE [LARGE SCALE GENOMIC DNA]</scope>
    <source>
        <strain>LT2 / SGSC1412 / ATCC 700720</strain>
    </source>
</reference>
<sequence length="360" mass="40275">MKKLLALAVIAPLLISCSSSTKKGETYNEAWVKDTNGFDILMGQFANNIENLWGYKEVLIAGPKDYVKYTDQFQTRSHINFDDGTITVETIAGTEPTAHLRRAIIKTLLMGDDPTSVDLYSDVDDIKISKEPFLYGQVLDNTGQPIRWEGRATTFADYLLKTRLKSRSNGLRIIYSVTINLVPNHLDKRAHKYIGMVRQASRKYGVDESLILAIMQTESSFNPYAVSHADALGLMQVVQHSAGKDVFRSQGKSGTPSRNFLFDPASNIDTGTAYLAMLNNVYLSGIENPTSRRYAVITAYNGGAGSVLRVFSNDKIQAANMINRMSPGDVYQILTTRHPSAESRRYLYKVNSAQRSYRRR</sequence>
<comment type="function">
    <text evidence="1">Murein-degrading enzyme. May play a role in recycling of muropeptides during cell elongation and/or cell division.</text>
</comment>
<comment type="catalytic activity">
    <reaction evidence="1">
        <text>Exolytic cleavage of the (1-&gt;4)-beta-glycosidic linkage between N-acetylmuramic acid (MurNAc) and N-acetylglucosamine (GlcNAc) residues in peptidoglycan, from either the reducing or the non-reducing ends of the peptidoglycan chains, with concomitant formation of a 1,6-anhydrobond in the MurNAc residue.</text>
        <dbReference type="EC" id="4.2.2.n1"/>
    </reaction>
</comment>
<comment type="subcellular location">
    <subcellularLocation>
        <location evidence="1">Cell outer membrane</location>
        <topology evidence="1">Lipid-anchor</topology>
    </subcellularLocation>
</comment>
<comment type="similarity">
    <text evidence="1">Belongs to the transglycosylase Slt family.</text>
</comment>
<comment type="sequence caution" evidence="2">
    <conflict type="erroneous initiation">
        <sequence resource="EMBL-CDS" id="AAL21987"/>
    </conflict>
</comment>